<feature type="chain" id="PRO_0000156792" description="Nicotinamide-nucleotide amidohydrolase PncC">
    <location>
        <begin position="1"/>
        <end position="164"/>
    </location>
</feature>
<gene>
    <name type="primary">pncC</name>
</gene>
<evidence type="ECO:0000250" key="1"/>
<evidence type="ECO:0000305" key="2"/>
<name>PNCC_ENTAG</name>
<sequence>MSEKRLHELSVEIGAALKAKGWWVTCAESCTGGLIAKAITDIAGSSAWFDRGFVTYSNAAKHELLGVSESTLEQYGAVSEQVVHEMALGVLHAAGADVAVSVSGIAGPDGGSAEKPVGTVWFGFAGKDGRVLTAKQQFSGDREAVRLQAAVFSLQTALREFIKN</sequence>
<proteinExistence type="inferred from homology"/>
<protein>
    <recommendedName>
        <fullName>Nicotinamide-nucleotide amidohydrolase PncC</fullName>
        <shortName>NMN amidohydrolase PncC</shortName>
        <ecNumber>3.5.1.42</ecNumber>
    </recommendedName>
    <alternativeName>
        <fullName>NMN deamidase</fullName>
    </alternativeName>
    <alternativeName>
        <fullName>Nicotinamide-nucleotide amidase</fullName>
    </alternativeName>
</protein>
<reference key="1">
    <citation type="submission" date="1993-01" db="EMBL/GenBank/DDBJ databases">
        <authorList>
            <person name="Rappold C.S.J."/>
            <person name="Klingmueller W."/>
        </authorList>
    </citation>
    <scope>NUCLEOTIDE SEQUENCE [GENOMIC DNA]</scope>
</reference>
<dbReference type="EC" id="3.5.1.42"/>
<dbReference type="EMBL" id="L03291">
    <property type="protein sequence ID" value="AAA91765.1"/>
    <property type="molecule type" value="Genomic_DNA"/>
</dbReference>
<dbReference type="PIR" id="S31480">
    <property type="entry name" value="S31480"/>
</dbReference>
<dbReference type="SMR" id="P51967"/>
<dbReference type="GO" id="GO:0019159">
    <property type="term" value="F:nicotinamide-nucleotide amidase activity"/>
    <property type="evidence" value="ECO:0007669"/>
    <property type="project" value="UniProtKB-EC"/>
</dbReference>
<dbReference type="GO" id="GO:0019363">
    <property type="term" value="P:pyridine nucleotide biosynthetic process"/>
    <property type="evidence" value="ECO:0007669"/>
    <property type="project" value="UniProtKB-KW"/>
</dbReference>
<dbReference type="Gene3D" id="3.90.950.20">
    <property type="entry name" value="CinA-like"/>
    <property type="match status" value="1"/>
</dbReference>
<dbReference type="InterPro" id="IPR036653">
    <property type="entry name" value="CinA-like_C"/>
</dbReference>
<dbReference type="InterPro" id="IPR008136">
    <property type="entry name" value="CinA_C"/>
</dbReference>
<dbReference type="NCBIfam" id="TIGR00199">
    <property type="entry name" value="PncC_domain"/>
    <property type="match status" value="1"/>
</dbReference>
<dbReference type="NCBIfam" id="NF002975">
    <property type="entry name" value="PRK03661.1"/>
    <property type="match status" value="1"/>
</dbReference>
<dbReference type="Pfam" id="PF02464">
    <property type="entry name" value="CinA"/>
    <property type="match status" value="1"/>
</dbReference>
<dbReference type="SUPFAM" id="SSF142433">
    <property type="entry name" value="CinA-like"/>
    <property type="match status" value="1"/>
</dbReference>
<keyword id="KW-0378">Hydrolase</keyword>
<keyword id="KW-0662">Pyridine nucleotide biosynthesis</keyword>
<comment type="function">
    <text evidence="1">Has NMN aminohydrolase activity, not active on other substrates.</text>
</comment>
<comment type="catalytic activity">
    <reaction>
        <text>beta-nicotinamide D-ribonucleotide + H2O = nicotinate beta-D-ribonucleotide + NH4(+)</text>
        <dbReference type="Rhea" id="RHEA:12400"/>
        <dbReference type="ChEBI" id="CHEBI:14649"/>
        <dbReference type="ChEBI" id="CHEBI:15377"/>
        <dbReference type="ChEBI" id="CHEBI:28938"/>
        <dbReference type="ChEBI" id="CHEBI:57502"/>
        <dbReference type="EC" id="3.5.1.42"/>
    </reaction>
</comment>
<comment type="subunit">
    <text evidence="1">Homodimer.</text>
</comment>
<comment type="similarity">
    <text evidence="2">Belongs to the CinA family. PncC subfamily.</text>
</comment>
<organism>
    <name type="scientific">Enterobacter agglomerans</name>
    <name type="common">Erwinia herbicola</name>
    <name type="synonym">Pantoea agglomerans</name>
    <dbReference type="NCBI Taxonomy" id="549"/>
    <lineage>
        <taxon>Bacteria</taxon>
        <taxon>Pseudomonadati</taxon>
        <taxon>Pseudomonadota</taxon>
        <taxon>Gammaproteobacteria</taxon>
        <taxon>Enterobacterales</taxon>
        <taxon>Erwiniaceae</taxon>
        <taxon>Pantoea</taxon>
        <taxon>Pantoea agglomerans group</taxon>
    </lineage>
</organism>
<accession>P51967</accession>